<keyword id="KW-0249">Electron transport</keyword>
<keyword id="KW-0274">FAD</keyword>
<keyword id="KW-0285">Flavoprotein</keyword>
<keyword id="KW-0349">Heme</keyword>
<keyword id="KW-0408">Iron</keyword>
<keyword id="KW-0472">Membrane</keyword>
<keyword id="KW-0479">Metal-binding</keyword>
<keyword id="KW-0521">NADP</keyword>
<keyword id="KW-0560">Oxidoreductase</keyword>
<keyword id="KW-1185">Reference proteome</keyword>
<keyword id="KW-0812">Transmembrane</keyword>
<keyword id="KW-1133">Transmembrane helix</keyword>
<keyword id="KW-0813">Transport</keyword>
<reference key="1">
    <citation type="journal article" date="2005" name="Biochim. Biophys. Acta">
        <title>NADPH oxidase homologs are required for normal cell differentiation and morphogenesis in Dictyostelium discoideum.</title>
        <authorList>
            <person name="Lardy B."/>
            <person name="Bof M."/>
            <person name="Aubry L."/>
            <person name="Paclet M.H."/>
            <person name="Morel F."/>
            <person name="Satre M."/>
            <person name="Klein G."/>
        </authorList>
    </citation>
    <scope>NUCLEOTIDE SEQUENCE [GENOMIC DNA]</scope>
    <scope>DEVELOPMENTAL STAGE</scope>
    <scope>DISRUPTION PHENOTYPE</scope>
</reference>
<reference key="2">
    <citation type="journal article" date="2005" name="Nature">
        <title>The genome of the social amoeba Dictyostelium discoideum.</title>
        <authorList>
            <person name="Eichinger L."/>
            <person name="Pachebat J.A."/>
            <person name="Gloeckner G."/>
            <person name="Rajandream M.A."/>
            <person name="Sucgang R."/>
            <person name="Berriman M."/>
            <person name="Song J."/>
            <person name="Olsen R."/>
            <person name="Szafranski K."/>
            <person name="Xu Q."/>
            <person name="Tunggal B."/>
            <person name="Kummerfeld S."/>
            <person name="Madera M."/>
            <person name="Konfortov B.A."/>
            <person name="Rivero F."/>
            <person name="Bankier A.T."/>
            <person name="Lehmann R."/>
            <person name="Hamlin N."/>
            <person name="Davies R."/>
            <person name="Gaudet P."/>
            <person name="Fey P."/>
            <person name="Pilcher K."/>
            <person name="Chen G."/>
            <person name="Saunders D."/>
            <person name="Sodergren E.J."/>
            <person name="Davis P."/>
            <person name="Kerhornou A."/>
            <person name="Nie X."/>
            <person name="Hall N."/>
            <person name="Anjard C."/>
            <person name="Hemphill L."/>
            <person name="Bason N."/>
            <person name="Farbrother P."/>
            <person name="Desany B."/>
            <person name="Just E."/>
            <person name="Morio T."/>
            <person name="Rost R."/>
            <person name="Churcher C.M."/>
            <person name="Cooper J."/>
            <person name="Haydock S."/>
            <person name="van Driessche N."/>
            <person name="Cronin A."/>
            <person name="Goodhead I."/>
            <person name="Muzny D.M."/>
            <person name="Mourier T."/>
            <person name="Pain A."/>
            <person name="Lu M."/>
            <person name="Harper D."/>
            <person name="Lindsay R."/>
            <person name="Hauser H."/>
            <person name="James K.D."/>
            <person name="Quiles M."/>
            <person name="Madan Babu M."/>
            <person name="Saito T."/>
            <person name="Buchrieser C."/>
            <person name="Wardroper A."/>
            <person name="Felder M."/>
            <person name="Thangavelu M."/>
            <person name="Johnson D."/>
            <person name="Knights A."/>
            <person name="Loulseged H."/>
            <person name="Mungall K.L."/>
            <person name="Oliver K."/>
            <person name="Price C."/>
            <person name="Quail M.A."/>
            <person name="Urushihara H."/>
            <person name="Hernandez J."/>
            <person name="Rabbinowitsch E."/>
            <person name="Steffen D."/>
            <person name="Sanders M."/>
            <person name="Ma J."/>
            <person name="Kohara Y."/>
            <person name="Sharp S."/>
            <person name="Simmonds M.N."/>
            <person name="Spiegler S."/>
            <person name="Tivey A."/>
            <person name="Sugano S."/>
            <person name="White B."/>
            <person name="Walker D."/>
            <person name="Woodward J.R."/>
            <person name="Winckler T."/>
            <person name="Tanaka Y."/>
            <person name="Shaulsky G."/>
            <person name="Schleicher M."/>
            <person name="Weinstock G.M."/>
            <person name="Rosenthal A."/>
            <person name="Cox E.C."/>
            <person name="Chisholm R.L."/>
            <person name="Gibbs R.A."/>
            <person name="Loomis W.F."/>
            <person name="Platzer M."/>
            <person name="Kay R.R."/>
            <person name="Williams J.G."/>
            <person name="Dear P.H."/>
            <person name="Noegel A.A."/>
            <person name="Barrell B.G."/>
            <person name="Kuspa A."/>
        </authorList>
    </citation>
    <scope>NUCLEOTIDE SEQUENCE [LARGE SCALE GENOMIC DNA]</scope>
    <source>
        <strain>AX4</strain>
    </source>
</reference>
<comment type="function">
    <text evidence="1">Critical component of the membrane-bound oxidase that generates superoxide. It is the terminal component of a respiratory chain that transfers single electrons from cytoplasmic NADPH across the plasma membrane to molecular oxygen on the exterior (By similarity).</text>
</comment>
<comment type="cofactor">
    <cofactor evidence="6">
        <name>FAD</name>
        <dbReference type="ChEBI" id="CHEBI:57692"/>
    </cofactor>
</comment>
<comment type="subunit">
    <text evidence="1">Composed of a heavy chain and a light chain.</text>
</comment>
<comment type="subcellular location">
    <subcellularLocation>
        <location evidence="6">Membrane</location>
        <topology evidence="6">Multi-pass membrane protein</topology>
    </subcellularLocation>
</comment>
<comment type="developmental stage">
    <text evidence="5">Expressed during development. Expressed during aggregation and shows a marked decrease in fruiting bodies.</text>
</comment>
<comment type="disruption phenotype">
    <text evidence="5">No visible phenotype on vegetative growth, but prevents formation of fruiting bodies.</text>
</comment>
<protein>
    <recommendedName>
        <fullName>Superoxide-generating NADPH oxidase heavy chain subunit B</fullName>
        <ecNumber>1.-.-.-</ecNumber>
    </recommendedName>
    <alternativeName>
        <fullName>NADPH oxidase B</fullName>
    </alternativeName>
    <alternativeName>
        <fullName>Superoxide-generating NADPH oxidase flavocytochrome B</fullName>
    </alternativeName>
</protein>
<organism>
    <name type="scientific">Dictyostelium discoideum</name>
    <name type="common">Social amoeba</name>
    <dbReference type="NCBI Taxonomy" id="44689"/>
    <lineage>
        <taxon>Eukaryota</taxon>
        <taxon>Amoebozoa</taxon>
        <taxon>Evosea</taxon>
        <taxon>Eumycetozoa</taxon>
        <taxon>Dictyostelia</taxon>
        <taxon>Dictyosteliales</taxon>
        <taxon>Dictyosteliaceae</taxon>
        <taxon>Dictyostelium</taxon>
    </lineage>
</organism>
<name>NOXB_DICDI</name>
<feature type="chain" id="PRO_0000361528" description="Superoxide-generating NADPH oxidase heavy chain subunit B">
    <location>
        <begin position="1"/>
        <end position="698"/>
    </location>
</feature>
<feature type="topological domain" description="Cytoplasmic" evidence="2">
    <location>
        <begin position="1"/>
        <end position="184"/>
    </location>
</feature>
<feature type="transmembrane region" description="Helical" evidence="2">
    <location>
        <begin position="185"/>
        <end position="205"/>
    </location>
</feature>
<feature type="topological domain" description="Extracellular" evidence="2">
    <location>
        <begin position="206"/>
        <end position="229"/>
    </location>
</feature>
<feature type="transmembrane region" description="Helical" evidence="2">
    <location>
        <begin position="230"/>
        <end position="250"/>
    </location>
</feature>
<feature type="topological domain" description="Cytoplasmic" evidence="2">
    <location>
        <begin position="251"/>
        <end position="269"/>
    </location>
</feature>
<feature type="transmembrane region" description="Helical" evidence="2">
    <location>
        <begin position="270"/>
        <end position="290"/>
    </location>
</feature>
<feature type="topological domain" description="Extracellular" evidence="2">
    <location>
        <begin position="291"/>
        <end position="324"/>
    </location>
</feature>
<feature type="transmembrane region" description="Helical" evidence="2">
    <location>
        <begin position="325"/>
        <end position="345"/>
    </location>
</feature>
<feature type="topological domain" description="Cytoplasmic" evidence="2">
    <location>
        <begin position="346"/>
        <end position="355"/>
    </location>
</feature>
<feature type="transmembrane region" description="Helical" evidence="2">
    <location>
        <begin position="356"/>
        <end position="376"/>
    </location>
</feature>
<feature type="topological domain" description="Extracellular" evidence="2">
    <location>
        <begin position="377"/>
        <end position="388"/>
    </location>
</feature>
<feature type="transmembrane region" description="Helical" evidence="2">
    <location>
        <begin position="389"/>
        <end position="409"/>
    </location>
</feature>
<feature type="topological domain" description="Cytoplasmic" evidence="2">
    <location>
        <begin position="410"/>
        <end position="698"/>
    </location>
</feature>
<feature type="domain" description="Ferric oxidoreductase">
    <location>
        <begin position="225"/>
        <end position="375"/>
    </location>
</feature>
<feature type="domain" description="FAD-binding FR-type" evidence="3">
    <location>
        <begin position="404"/>
        <end position="528"/>
    </location>
</feature>
<feature type="region of interest" description="Disordered" evidence="4">
    <location>
        <begin position="1"/>
        <end position="68"/>
    </location>
</feature>
<feature type="region of interest" description="Disordered" evidence="4">
    <location>
        <begin position="134"/>
        <end position="158"/>
    </location>
</feature>
<feature type="compositionally biased region" description="Polar residues" evidence="4">
    <location>
        <begin position="16"/>
        <end position="25"/>
    </location>
</feature>
<feature type="compositionally biased region" description="Polar residues" evidence="4">
    <location>
        <begin position="33"/>
        <end position="53"/>
    </location>
</feature>
<feature type="compositionally biased region" description="Low complexity" evidence="4">
    <location>
        <begin position="54"/>
        <end position="65"/>
    </location>
</feature>
<feature type="compositionally biased region" description="Low complexity" evidence="4">
    <location>
        <begin position="138"/>
        <end position="156"/>
    </location>
</feature>
<feature type="binding site" description="axial binding residue" evidence="1">
    <location>
        <position position="268"/>
    </location>
    <ligand>
        <name>heme</name>
        <dbReference type="ChEBI" id="CHEBI:30413"/>
    </ligand>
    <ligandPart>
        <name>Fe</name>
        <dbReference type="ChEBI" id="CHEBI:18248"/>
    </ligandPart>
</feature>
<feature type="binding site" description="axial binding residue" evidence="1">
    <location>
        <position position="282"/>
    </location>
    <ligand>
        <name>heme</name>
        <dbReference type="ChEBI" id="CHEBI:30413"/>
    </ligand>
    <ligandPart>
        <name>Fe</name>
        <dbReference type="ChEBI" id="CHEBI:18248"/>
    </ligandPart>
</feature>
<feature type="binding site" description="axial binding residue" evidence="1">
    <location>
        <position position="364"/>
    </location>
    <ligand>
        <name>heme</name>
        <dbReference type="ChEBI" id="CHEBI:30413"/>
    </ligand>
    <ligandPart>
        <name>Fe</name>
        <dbReference type="ChEBI" id="CHEBI:18248"/>
    </ligandPart>
</feature>
<feature type="binding site" description="axial binding residue" evidence="1">
    <location>
        <position position="377"/>
    </location>
    <ligand>
        <name>heme</name>
        <dbReference type="ChEBI" id="CHEBI:30413"/>
    </ligand>
    <ligandPart>
        <name>Fe</name>
        <dbReference type="ChEBI" id="CHEBI:18248"/>
    </ligandPart>
</feature>
<feature type="binding site" evidence="2">
    <location>
        <begin position="460"/>
        <end position="466"/>
    </location>
    <ligand>
        <name>FAD</name>
        <dbReference type="ChEBI" id="CHEBI:57692"/>
    </ligand>
</feature>
<sequence>MNEKKELQQELELQEFQTPKNQQLEKLQEPNGEISSTGNETSESGISSPPISQNDNSNNENESLNITPNKPFVSMQEELQNLDIENIPIPPTIQTPKIYKNTNNLIHSKNNLSLPISLSQENIVKLDKVDIESNDQVNSNTDNNNNTNNNNNTNNNKNEKIGLRSKIFKSKIFIKIRGWWWHRGISTYIMLFYIALNIGVGVHMFYNMYHSDIFKFLGLSFCFSRTAARLINLNSAVILLPVLRNFLSWLRGTIVNNYIPIDKHLNFHKLCAFMLFCCTIIHCVGHYISFKKINDDVLKIDDGKSVAGDYLNININNFPDEKYLFFKSVPGITGHIMLLILILIVSSSMWRIRRPMFEIFWYVHHLFIPFYILLCFHGYSKILKKDPQSWMWIIAPFILYSIERLIRIARSKKRVILEKAIMHPSKVLELRMKRDNDNFNFKPGQYLYLNCPSIAYHEWHPFTITSAPDDPFISVHINIVGNWTRKLFKLLNPDNKLGLIQEDLKSTQNRGKRRILKIDGPFGAPAENFFKYRNLVLIGAGIGVTPFSSILRHLKNQNDKQTNADENHLKINKIYFIWISRQKNSFQWFTDILAELENDERIDSILEIHIFLTGALELDDYAKIKNAQKCHITNLHSKTLFGRPNFRSIFNQLTQLHQREKIGVFYCGNKALGKNIIKNCNKFNGKNNCHLIFHKENF</sequence>
<proteinExistence type="evidence at transcript level"/>
<dbReference type="EC" id="1.-.-.-"/>
<dbReference type="EMBL" id="AY221173">
    <property type="protein sequence ID" value="AAO62421.1"/>
    <property type="molecule type" value="Genomic_DNA"/>
</dbReference>
<dbReference type="EMBL" id="AAFI02000096">
    <property type="protein sequence ID" value="EAL63915.1"/>
    <property type="molecule type" value="Genomic_DNA"/>
</dbReference>
<dbReference type="RefSeq" id="XP_637386.1">
    <property type="nucleotide sequence ID" value="XM_632294.1"/>
</dbReference>
<dbReference type="SMR" id="Q86GL4"/>
<dbReference type="FunCoup" id="Q86GL4">
    <property type="interactions" value="32"/>
</dbReference>
<dbReference type="STRING" id="44689.Q86GL4"/>
<dbReference type="PeroxiBase" id="5485">
    <property type="entry name" value="DdNOx02"/>
</dbReference>
<dbReference type="TCDB" id="5.B.1.1.12">
    <property type="family name" value="the phagocyte (gp91(phox)) nadph oxidase family"/>
</dbReference>
<dbReference type="PaxDb" id="44689-DDB0191445"/>
<dbReference type="ABCD" id="Q86GL4">
    <property type="antibodies" value="4 sequenced antibodies"/>
</dbReference>
<dbReference type="EnsemblProtists" id="EAL63915">
    <property type="protein sequence ID" value="EAL63915"/>
    <property type="gene ID" value="DDB_G0287101"/>
</dbReference>
<dbReference type="GeneID" id="8625916"/>
<dbReference type="KEGG" id="ddi:DDB_G0287101"/>
<dbReference type="dictyBase" id="DDB_G0287101">
    <property type="gene designation" value="noxB"/>
</dbReference>
<dbReference type="VEuPathDB" id="AmoebaDB:DDB_G0287101"/>
<dbReference type="eggNOG" id="KOG0039">
    <property type="taxonomic scope" value="Eukaryota"/>
</dbReference>
<dbReference type="HOGENOM" id="CLU_005646_3_1_1"/>
<dbReference type="InParanoid" id="Q86GL4"/>
<dbReference type="OMA" id="DENQAIH"/>
<dbReference type="PhylomeDB" id="Q86GL4"/>
<dbReference type="Reactome" id="R-DDI-209968">
    <property type="pathway name" value="Thyroxine biosynthesis"/>
</dbReference>
<dbReference type="Reactome" id="R-DDI-3299685">
    <property type="pathway name" value="Detoxification of Reactive Oxygen Species"/>
</dbReference>
<dbReference type="Reactome" id="R-DDI-6798695">
    <property type="pathway name" value="Neutrophil degranulation"/>
</dbReference>
<dbReference type="PRO" id="PR:Q86GL4"/>
<dbReference type="Proteomes" id="UP000002195">
    <property type="component" value="Chromosome 4"/>
</dbReference>
<dbReference type="GO" id="GO:0043020">
    <property type="term" value="C:NADPH oxidase complex"/>
    <property type="evidence" value="ECO:0000318"/>
    <property type="project" value="GO_Central"/>
</dbReference>
<dbReference type="GO" id="GO:0005886">
    <property type="term" value="C:plasma membrane"/>
    <property type="evidence" value="ECO:0000318"/>
    <property type="project" value="GO_Central"/>
</dbReference>
<dbReference type="GO" id="GO:0050660">
    <property type="term" value="F:flavin adenine dinucleotide binding"/>
    <property type="evidence" value="ECO:0000250"/>
    <property type="project" value="dictyBase"/>
</dbReference>
<dbReference type="GO" id="GO:0020037">
    <property type="term" value="F:heme binding"/>
    <property type="evidence" value="ECO:0000250"/>
    <property type="project" value="dictyBase"/>
</dbReference>
<dbReference type="GO" id="GO:0046872">
    <property type="term" value="F:metal ion binding"/>
    <property type="evidence" value="ECO:0007669"/>
    <property type="project" value="UniProtKB-KW"/>
</dbReference>
<dbReference type="GO" id="GO:0016175">
    <property type="term" value="F:superoxide-generating NAD(P)H oxidase activity"/>
    <property type="evidence" value="ECO:0000315"/>
    <property type="project" value="dictyBase"/>
</dbReference>
<dbReference type="GO" id="GO:0006952">
    <property type="term" value="P:defense response"/>
    <property type="evidence" value="ECO:0000318"/>
    <property type="project" value="GO_Central"/>
</dbReference>
<dbReference type="GO" id="GO:0042742">
    <property type="term" value="P:defense response to bacterium"/>
    <property type="evidence" value="ECO:0000316"/>
    <property type="project" value="dictyBase"/>
</dbReference>
<dbReference type="GO" id="GO:0030587">
    <property type="term" value="P:sorocarp development"/>
    <property type="evidence" value="ECO:0000315"/>
    <property type="project" value="dictyBase"/>
</dbReference>
<dbReference type="GO" id="GO:0030435">
    <property type="term" value="P:sporulation resulting in formation of a cellular spore"/>
    <property type="evidence" value="ECO:0000315"/>
    <property type="project" value="dictyBase"/>
</dbReference>
<dbReference type="GO" id="GO:0042554">
    <property type="term" value="P:superoxide anion generation"/>
    <property type="evidence" value="ECO:0000315"/>
    <property type="project" value="dictyBase"/>
</dbReference>
<dbReference type="CDD" id="cd06186">
    <property type="entry name" value="NOX_Duox_like_FAD_NADP"/>
    <property type="match status" value="1"/>
</dbReference>
<dbReference type="Gene3D" id="3.40.50.80">
    <property type="entry name" value="Nucleotide-binding domain of ferredoxin-NADP reductase (FNR) module"/>
    <property type="match status" value="1"/>
</dbReference>
<dbReference type="Gene3D" id="2.40.30.10">
    <property type="entry name" value="Translation factors"/>
    <property type="match status" value="1"/>
</dbReference>
<dbReference type="InterPro" id="IPR013112">
    <property type="entry name" value="FAD-bd_8"/>
</dbReference>
<dbReference type="InterPro" id="IPR017927">
    <property type="entry name" value="FAD-bd_FR_type"/>
</dbReference>
<dbReference type="InterPro" id="IPR013130">
    <property type="entry name" value="Fe3_Rdtase_TM_dom"/>
</dbReference>
<dbReference type="InterPro" id="IPR013121">
    <property type="entry name" value="Fe_red_NAD-bd_6"/>
</dbReference>
<dbReference type="InterPro" id="IPR039261">
    <property type="entry name" value="FNR_nucleotide-bd"/>
</dbReference>
<dbReference type="InterPro" id="IPR050369">
    <property type="entry name" value="RBOH/FRE"/>
</dbReference>
<dbReference type="InterPro" id="IPR017938">
    <property type="entry name" value="Riboflavin_synthase-like_b-brl"/>
</dbReference>
<dbReference type="PANTHER" id="PTHR11972">
    <property type="entry name" value="NADPH OXIDASE"/>
    <property type="match status" value="1"/>
</dbReference>
<dbReference type="PANTHER" id="PTHR11972:SF165">
    <property type="entry name" value="SUPEROXIDE-GENERATING NADPH OXIDASE HEAVY CHAIN SUBUNIT B"/>
    <property type="match status" value="1"/>
</dbReference>
<dbReference type="Pfam" id="PF08022">
    <property type="entry name" value="FAD_binding_8"/>
    <property type="match status" value="1"/>
</dbReference>
<dbReference type="Pfam" id="PF01794">
    <property type="entry name" value="Ferric_reduct"/>
    <property type="match status" value="1"/>
</dbReference>
<dbReference type="Pfam" id="PF08030">
    <property type="entry name" value="NAD_binding_6"/>
    <property type="match status" value="1"/>
</dbReference>
<dbReference type="SFLD" id="SFLDS00052">
    <property type="entry name" value="Ferric_Reductase_Domain"/>
    <property type="match status" value="1"/>
</dbReference>
<dbReference type="SFLD" id="SFLDG01168">
    <property type="entry name" value="Ferric_reductase_subgroup_(FRE"/>
    <property type="match status" value="1"/>
</dbReference>
<dbReference type="SFLD" id="SFLDG01169">
    <property type="entry name" value="NADPH_oxidase_subgroup_(NOX)"/>
    <property type="match status" value="1"/>
</dbReference>
<dbReference type="SUPFAM" id="SSF52343">
    <property type="entry name" value="Ferredoxin reductase-like, C-terminal NADP-linked domain"/>
    <property type="match status" value="1"/>
</dbReference>
<dbReference type="SUPFAM" id="SSF63380">
    <property type="entry name" value="Riboflavin synthase domain-like"/>
    <property type="match status" value="1"/>
</dbReference>
<dbReference type="PROSITE" id="PS51384">
    <property type="entry name" value="FAD_FR"/>
    <property type="match status" value="1"/>
</dbReference>
<gene>
    <name type="primary">noxB</name>
    <name type="ORF">DDB_G0287101</name>
</gene>
<accession>Q86GL4</accession>
<accession>Q54KY4</accession>
<evidence type="ECO:0000250" key="1"/>
<evidence type="ECO:0000255" key="2"/>
<evidence type="ECO:0000255" key="3">
    <source>
        <dbReference type="PROSITE-ProRule" id="PRU00716"/>
    </source>
</evidence>
<evidence type="ECO:0000256" key="4">
    <source>
        <dbReference type="SAM" id="MobiDB-lite"/>
    </source>
</evidence>
<evidence type="ECO:0000269" key="5">
    <source>
    </source>
</evidence>
<evidence type="ECO:0000305" key="6"/>